<comment type="function">
    <text evidence="1">Binds to the 23S rRNA.</text>
</comment>
<comment type="similarity">
    <text evidence="1">Belongs to the bacterial ribosomal protein bL9 family.</text>
</comment>
<comment type="sequence caution" evidence="3">
    <conflict type="erroneous initiation">
        <sequence resource="EMBL-CDS" id="ABC21216"/>
    </conflict>
</comment>
<protein>
    <recommendedName>
        <fullName evidence="1">Large ribosomal subunit protein bL9</fullName>
    </recommendedName>
    <alternativeName>
        <fullName evidence="3">50S ribosomal protein L9</fullName>
    </alternativeName>
</protein>
<accession>Q2RXC9</accession>
<dbReference type="EMBL" id="CP000230">
    <property type="protein sequence ID" value="ABC21216.1"/>
    <property type="status" value="ALT_INIT"/>
    <property type="molecule type" value="Genomic_DNA"/>
</dbReference>
<dbReference type="RefSeq" id="WP_014625933.1">
    <property type="nucleotide sequence ID" value="NC_007643.1"/>
</dbReference>
<dbReference type="RefSeq" id="YP_425503.1">
    <property type="nucleotide sequence ID" value="NC_007643.1"/>
</dbReference>
<dbReference type="SMR" id="Q2RXC9"/>
<dbReference type="STRING" id="269796.Rru_A0411"/>
<dbReference type="EnsemblBacteria" id="ABC21216">
    <property type="protein sequence ID" value="ABC21216"/>
    <property type="gene ID" value="Rru_A0411"/>
</dbReference>
<dbReference type="KEGG" id="rru:Rru_A0411"/>
<dbReference type="PATRIC" id="fig|269796.9.peg.467"/>
<dbReference type="eggNOG" id="COG0359">
    <property type="taxonomic scope" value="Bacteria"/>
</dbReference>
<dbReference type="HOGENOM" id="CLU_078938_1_0_5"/>
<dbReference type="PhylomeDB" id="Q2RXC9"/>
<dbReference type="Proteomes" id="UP000001929">
    <property type="component" value="Chromosome"/>
</dbReference>
<dbReference type="GO" id="GO:1990904">
    <property type="term" value="C:ribonucleoprotein complex"/>
    <property type="evidence" value="ECO:0007669"/>
    <property type="project" value="UniProtKB-KW"/>
</dbReference>
<dbReference type="GO" id="GO:0005840">
    <property type="term" value="C:ribosome"/>
    <property type="evidence" value="ECO:0007669"/>
    <property type="project" value="UniProtKB-KW"/>
</dbReference>
<dbReference type="GO" id="GO:0019843">
    <property type="term" value="F:rRNA binding"/>
    <property type="evidence" value="ECO:0007669"/>
    <property type="project" value="UniProtKB-UniRule"/>
</dbReference>
<dbReference type="GO" id="GO:0003735">
    <property type="term" value="F:structural constituent of ribosome"/>
    <property type="evidence" value="ECO:0007669"/>
    <property type="project" value="InterPro"/>
</dbReference>
<dbReference type="GO" id="GO:0006412">
    <property type="term" value="P:translation"/>
    <property type="evidence" value="ECO:0007669"/>
    <property type="project" value="UniProtKB-UniRule"/>
</dbReference>
<dbReference type="Gene3D" id="3.10.430.100">
    <property type="entry name" value="Ribosomal protein L9, C-terminal domain"/>
    <property type="match status" value="1"/>
</dbReference>
<dbReference type="Gene3D" id="3.40.5.10">
    <property type="entry name" value="Ribosomal protein L9, N-terminal domain"/>
    <property type="match status" value="1"/>
</dbReference>
<dbReference type="HAMAP" id="MF_00503">
    <property type="entry name" value="Ribosomal_bL9"/>
    <property type="match status" value="1"/>
</dbReference>
<dbReference type="InterPro" id="IPR000244">
    <property type="entry name" value="Ribosomal_bL9"/>
</dbReference>
<dbReference type="InterPro" id="IPR009027">
    <property type="entry name" value="Ribosomal_bL9/RNase_H1_N"/>
</dbReference>
<dbReference type="InterPro" id="IPR020594">
    <property type="entry name" value="Ribosomal_bL9_bac/chp"/>
</dbReference>
<dbReference type="InterPro" id="IPR020069">
    <property type="entry name" value="Ribosomal_bL9_C"/>
</dbReference>
<dbReference type="InterPro" id="IPR036791">
    <property type="entry name" value="Ribosomal_bL9_C_sf"/>
</dbReference>
<dbReference type="InterPro" id="IPR020070">
    <property type="entry name" value="Ribosomal_bL9_N"/>
</dbReference>
<dbReference type="InterPro" id="IPR036935">
    <property type="entry name" value="Ribosomal_bL9_N_sf"/>
</dbReference>
<dbReference type="NCBIfam" id="TIGR00158">
    <property type="entry name" value="L9"/>
    <property type="match status" value="1"/>
</dbReference>
<dbReference type="PANTHER" id="PTHR21368">
    <property type="entry name" value="50S RIBOSOMAL PROTEIN L9"/>
    <property type="match status" value="1"/>
</dbReference>
<dbReference type="Pfam" id="PF03948">
    <property type="entry name" value="Ribosomal_L9_C"/>
    <property type="match status" value="1"/>
</dbReference>
<dbReference type="Pfam" id="PF01281">
    <property type="entry name" value="Ribosomal_L9_N"/>
    <property type="match status" value="1"/>
</dbReference>
<dbReference type="SUPFAM" id="SSF55658">
    <property type="entry name" value="L9 N-domain-like"/>
    <property type="match status" value="1"/>
</dbReference>
<dbReference type="SUPFAM" id="SSF55653">
    <property type="entry name" value="Ribosomal protein L9 C-domain"/>
    <property type="match status" value="1"/>
</dbReference>
<dbReference type="PROSITE" id="PS00651">
    <property type="entry name" value="RIBOSOMAL_L9"/>
    <property type="match status" value="1"/>
</dbReference>
<sequence>MEVILLERIENLGFMGDIVKVKDGYARNFLLPQKKALRKSKSNLEYFNAQKVELEALNLKRKGEAEAVAVKLDGLNLVMVRQAGESGQLYGSVSARDITDSLKAEGFVIARSQVLLNHPIKDLGRYETRVSLHPEVIVTITVVVARSEAEAQASAAAAAALLERPEDAEEAVANEEEAEAALLDDEDADEYEQG</sequence>
<keyword id="KW-1185">Reference proteome</keyword>
<keyword id="KW-0687">Ribonucleoprotein</keyword>
<keyword id="KW-0689">Ribosomal protein</keyword>
<keyword id="KW-0694">RNA-binding</keyword>
<keyword id="KW-0699">rRNA-binding</keyword>
<name>RL9_RHORT</name>
<evidence type="ECO:0000255" key="1">
    <source>
        <dbReference type="HAMAP-Rule" id="MF_00503"/>
    </source>
</evidence>
<evidence type="ECO:0000256" key="2">
    <source>
        <dbReference type="SAM" id="MobiDB-lite"/>
    </source>
</evidence>
<evidence type="ECO:0000305" key="3"/>
<gene>
    <name evidence="1" type="primary">rplI</name>
    <name type="ordered locus">Rru_A0411</name>
</gene>
<organism>
    <name type="scientific">Rhodospirillum rubrum (strain ATCC 11170 / ATH 1.1.1 / DSM 467 / LMG 4362 / NCIMB 8255 / S1)</name>
    <dbReference type="NCBI Taxonomy" id="269796"/>
    <lineage>
        <taxon>Bacteria</taxon>
        <taxon>Pseudomonadati</taxon>
        <taxon>Pseudomonadota</taxon>
        <taxon>Alphaproteobacteria</taxon>
        <taxon>Rhodospirillales</taxon>
        <taxon>Rhodospirillaceae</taxon>
        <taxon>Rhodospirillum</taxon>
    </lineage>
</organism>
<proteinExistence type="inferred from homology"/>
<feature type="chain" id="PRO_0000236578" description="Large ribosomal subunit protein bL9">
    <location>
        <begin position="1"/>
        <end position="194"/>
    </location>
</feature>
<feature type="region of interest" description="Disordered" evidence="2">
    <location>
        <begin position="165"/>
        <end position="194"/>
    </location>
</feature>
<feature type="compositionally biased region" description="Acidic residues" evidence="2">
    <location>
        <begin position="166"/>
        <end position="194"/>
    </location>
</feature>
<reference key="1">
    <citation type="journal article" date="2011" name="Stand. Genomic Sci.">
        <title>Complete genome sequence of Rhodospirillum rubrum type strain (S1).</title>
        <authorList>
            <person name="Munk A.C."/>
            <person name="Copeland A."/>
            <person name="Lucas S."/>
            <person name="Lapidus A."/>
            <person name="Del Rio T.G."/>
            <person name="Barry K."/>
            <person name="Detter J.C."/>
            <person name="Hammon N."/>
            <person name="Israni S."/>
            <person name="Pitluck S."/>
            <person name="Brettin T."/>
            <person name="Bruce D."/>
            <person name="Han C."/>
            <person name="Tapia R."/>
            <person name="Gilna P."/>
            <person name="Schmutz J."/>
            <person name="Larimer F."/>
            <person name="Land M."/>
            <person name="Kyrpides N.C."/>
            <person name="Mavromatis K."/>
            <person name="Richardson P."/>
            <person name="Rohde M."/>
            <person name="Goeker M."/>
            <person name="Klenk H.P."/>
            <person name="Zhang Y."/>
            <person name="Roberts G.P."/>
            <person name="Reslewic S."/>
            <person name="Schwartz D.C."/>
        </authorList>
    </citation>
    <scope>NUCLEOTIDE SEQUENCE [LARGE SCALE GENOMIC DNA]</scope>
    <source>
        <strain>ATCC 11170 / ATH 1.1.1 / DSM 467 / LMG 4362 / NCIMB 8255 / S1</strain>
    </source>
</reference>